<sequence length="159" mass="17196">MRPLVIILMGSSSDMGHAEKIASELKTFGIEYAIRIGSAHKTAEHVVSMLKEYEALDRPKLYITIAGRSNALSGFVDGFVKGATIACPPPSDSFAGADIYSSLRMPSGISPALVLEPKNAALLAARIFSLYDKEIADSVKSYMESNAQKIIEDDSKLKR</sequence>
<protein>
    <recommendedName>
        <fullName evidence="1 4">Phosphoribosylaminoimidazole carboxylase</fullName>
        <ecNumber evidence="1 2">4.1.1.21</ecNumber>
    </recommendedName>
    <alternativeName>
        <fullName evidence="1 3">AIR carboxylase</fullName>
        <shortName evidence="1 4">AIRC</shortName>
    </alternativeName>
</protein>
<keyword id="KW-0002">3D-structure</keyword>
<keyword id="KW-0456">Lyase</keyword>
<keyword id="KW-0658">Purine biosynthesis</keyword>
<keyword id="KW-1185">Reference proteome</keyword>
<reference key="1">
    <citation type="journal article" date="2004" name="Proc. Natl. Acad. Sci. U.S.A.">
        <title>Comparison of the genome of the oral pathogen Treponema denticola with other spirochete genomes.</title>
        <authorList>
            <person name="Seshadri R."/>
            <person name="Myers G.S.A."/>
            <person name="Tettelin H."/>
            <person name="Eisen J.A."/>
            <person name="Heidelberg J.F."/>
            <person name="Dodson R.J."/>
            <person name="Davidsen T.M."/>
            <person name="DeBoy R.T."/>
            <person name="Fouts D.E."/>
            <person name="Haft D.H."/>
            <person name="Selengut J."/>
            <person name="Ren Q."/>
            <person name="Brinkac L.M."/>
            <person name="Madupu R."/>
            <person name="Kolonay J.F."/>
            <person name="Durkin S.A."/>
            <person name="Daugherty S.C."/>
            <person name="Shetty J."/>
            <person name="Shvartsbeyn A."/>
            <person name="Gebregeorgis E."/>
            <person name="Geer K."/>
            <person name="Tsegaye G."/>
            <person name="Malek J.A."/>
            <person name="Ayodeji B."/>
            <person name="Shatsman S."/>
            <person name="McLeod M.P."/>
            <person name="Smajs D."/>
            <person name="Howell J.K."/>
            <person name="Pal S."/>
            <person name="Amin A."/>
            <person name="Vashisth P."/>
            <person name="McNeill T.Z."/>
            <person name="Xiang Q."/>
            <person name="Sodergren E."/>
            <person name="Baca E."/>
            <person name="Weinstock G.M."/>
            <person name="Norris S.J."/>
            <person name="Fraser C.M."/>
            <person name="Paulsen I.T."/>
        </authorList>
    </citation>
    <scope>NUCLEOTIDE SEQUENCE [LARGE SCALE GENOMIC DNA]</scope>
    <source>
        <strain>ATCC 35405 / DSM 14222 / CIP 103919 / JCM 8153 / KCTC 15104</strain>
    </source>
</reference>
<reference evidence="7 8" key="2">
    <citation type="journal article" date="2011" name="Biochemistry">
        <title>Treponema denticola PurE is a bacterial AIR carboxylase.</title>
        <authorList>
            <person name="Tranchimand S."/>
            <person name="Starks C.M."/>
            <person name="Mathews I.I."/>
            <person name="Hockings S.C."/>
            <person name="Kappock T.J."/>
        </authorList>
    </citation>
    <scope>X-RAY CRYSTALLOGRAPHY (1.74 ANGSTROMS) IN COMPLEX WITH 5-AMINOIMIDAZOLE RIBONUCLEOTIDE</scope>
    <scope>FUNCTION</scope>
    <scope>CATALYTIC ACTIVITY</scope>
    <scope>BIOPHYSICOCHEMICAL PROPERTIES</scope>
    <scope>PATHWAY</scope>
    <scope>MASS SPECTROMETRY</scope>
    <scope>SUBFAMILY</scope>
    <scope>MUTAGENESIS OF HIS-40</scope>
    <source>
        <strain>ATCC 35405 / DSM 14222 / CIP 103919 / JCM 8153 / KCTC 15104</strain>
    </source>
</reference>
<organism>
    <name type="scientific">Treponema denticola (strain ATCC 35405 / DSM 14222 / CIP 103919 / JCM 8153 / KCTC 15104)</name>
    <dbReference type="NCBI Taxonomy" id="243275"/>
    <lineage>
        <taxon>Bacteria</taxon>
        <taxon>Pseudomonadati</taxon>
        <taxon>Spirochaetota</taxon>
        <taxon>Spirochaetia</taxon>
        <taxon>Spirochaetales</taxon>
        <taxon>Treponemataceae</taxon>
        <taxon>Treponema</taxon>
    </lineage>
</organism>
<dbReference type="EC" id="4.1.1.21" evidence="1 2"/>
<dbReference type="EMBL" id="AE017226">
    <property type="protein sequence ID" value="AAS11180.1"/>
    <property type="molecule type" value="Genomic_DNA"/>
</dbReference>
<dbReference type="RefSeq" id="NP_971299.1">
    <property type="nucleotide sequence ID" value="NC_002967.9"/>
</dbReference>
<dbReference type="RefSeq" id="WP_002681904.1">
    <property type="nucleotide sequence ID" value="NC_002967.9"/>
</dbReference>
<dbReference type="PDB" id="3RG8">
    <property type="method" value="X-ray"/>
    <property type="resolution" value="1.74 A"/>
    <property type="chains" value="A/B/C/D/E/F/G/H=1-159"/>
</dbReference>
<dbReference type="PDB" id="3RGG">
    <property type="method" value="X-ray"/>
    <property type="resolution" value="1.82 A"/>
    <property type="chains" value="A/B/C/D=1-159"/>
</dbReference>
<dbReference type="PDB" id="5C5D">
    <property type="method" value="X-ray"/>
    <property type="resolution" value="1.69 A"/>
    <property type="chains" value="A/B/C/D=1-159"/>
</dbReference>
<dbReference type="PDBsum" id="3RG8"/>
<dbReference type="PDBsum" id="3RGG"/>
<dbReference type="PDBsum" id="5C5D"/>
<dbReference type="SMR" id="Q73PV9"/>
<dbReference type="STRING" id="243275.TDE_0687"/>
<dbReference type="PaxDb" id="243275-TDE_0687"/>
<dbReference type="GeneID" id="2740246"/>
<dbReference type="KEGG" id="tde:TDE_0687"/>
<dbReference type="PATRIC" id="fig|243275.7.peg.667"/>
<dbReference type="eggNOG" id="COG0041">
    <property type="taxonomic scope" value="Bacteria"/>
</dbReference>
<dbReference type="HOGENOM" id="CLU_094982_2_0_12"/>
<dbReference type="OrthoDB" id="157789at2"/>
<dbReference type="BRENDA" id="4.1.1.21">
    <property type="organism ID" value="6426"/>
</dbReference>
<dbReference type="UniPathway" id="UPA00074">
    <property type="reaction ID" value="UER00130"/>
</dbReference>
<dbReference type="EvolutionaryTrace" id="Q73PV9"/>
<dbReference type="Proteomes" id="UP000008212">
    <property type="component" value="Chromosome"/>
</dbReference>
<dbReference type="GO" id="GO:0004638">
    <property type="term" value="F:phosphoribosylaminoimidazole carboxylase activity"/>
    <property type="evidence" value="ECO:0007669"/>
    <property type="project" value="UniProtKB-UniRule"/>
</dbReference>
<dbReference type="GO" id="GO:0006189">
    <property type="term" value="P:'de novo' IMP biosynthetic process"/>
    <property type="evidence" value="ECO:0007669"/>
    <property type="project" value="UniProtKB-UniRule"/>
</dbReference>
<dbReference type="Gene3D" id="3.40.50.1970">
    <property type="match status" value="1"/>
</dbReference>
<dbReference type="HAMAP" id="MF_02045">
    <property type="entry name" value="PurE_classII"/>
    <property type="match status" value="1"/>
</dbReference>
<dbReference type="InterPro" id="IPR033626">
    <property type="entry name" value="PurE_classII"/>
</dbReference>
<dbReference type="InterPro" id="IPR000031">
    <property type="entry name" value="PurE_dom"/>
</dbReference>
<dbReference type="InterPro" id="IPR024694">
    <property type="entry name" value="PurE_prokaryotes"/>
</dbReference>
<dbReference type="PANTHER" id="PTHR23046:SF2">
    <property type="entry name" value="PHOSPHORIBOSYLAMINOIMIDAZOLE CARBOXYLASE"/>
    <property type="match status" value="1"/>
</dbReference>
<dbReference type="PANTHER" id="PTHR23046">
    <property type="entry name" value="PHOSPHORIBOSYLAMINOIMIDAZOLE CARBOXYLASE CATALYTIC SUBUNIT"/>
    <property type="match status" value="1"/>
</dbReference>
<dbReference type="Pfam" id="PF00731">
    <property type="entry name" value="AIRC"/>
    <property type="match status" value="1"/>
</dbReference>
<dbReference type="PIRSF" id="PIRSF001338">
    <property type="entry name" value="AIR_carboxylase"/>
    <property type="match status" value="1"/>
</dbReference>
<dbReference type="SMART" id="SM01001">
    <property type="entry name" value="AIRC"/>
    <property type="match status" value="1"/>
</dbReference>
<dbReference type="SUPFAM" id="SSF52255">
    <property type="entry name" value="N5-CAIR mutase (phosphoribosylaminoimidazole carboxylase, PurE)"/>
    <property type="match status" value="1"/>
</dbReference>
<comment type="function">
    <text evidence="2">Catalyzes the reversible conversion of 5-aminoimidazole ribonucleotide (AIR) and CO(2) to 4-carboxy-5-aminoimidazole ribonucleotide (CAIR). Does not accept N5-carboxyaminoimidazole ribonucleotide (N5-CAIR) as a substrate.</text>
</comment>
<comment type="catalytic activity">
    <reaction evidence="1 2">
        <text>5-amino-1-(5-phospho-D-ribosyl)imidazole-4-carboxylate + H(+) = 5-amino-1-(5-phospho-beta-D-ribosyl)imidazole + CO2</text>
        <dbReference type="Rhea" id="RHEA:10792"/>
        <dbReference type="ChEBI" id="CHEBI:15378"/>
        <dbReference type="ChEBI" id="CHEBI:16526"/>
        <dbReference type="ChEBI" id="CHEBI:77657"/>
        <dbReference type="ChEBI" id="CHEBI:137981"/>
        <dbReference type="EC" id="4.1.1.21"/>
    </reaction>
</comment>
<comment type="biophysicochemical properties">
    <kinetics>
        <KM evidence="2">13 mM for CO(2) (at 10 degrees Celsius)</KM>
        <KM evidence="2">60 uM for AIR (at 10 degrees Celsius)</KM>
        <text evidence="2">kcat is 77 sec(-1).</text>
    </kinetics>
</comment>
<comment type="pathway">
    <text evidence="1 2">Purine metabolism; IMP biosynthesis via de novo pathway; 5-amino-1-(5-phospho-D-ribosyl)imidazole-4-carboxylate from 5-amino-1-(5-phospho-D-ribosyl)imidazole (carboxylase route): step 1/1.</text>
</comment>
<comment type="mass spectrometry" mass="17195.0" error="3.0" method="Electrospray" evidence="2"/>
<comment type="similarity">
    <text evidence="1 5">Belongs to the AIR carboxylase family. Class II subfamily.</text>
</comment>
<evidence type="ECO:0000255" key="1">
    <source>
        <dbReference type="HAMAP-Rule" id="MF_02045"/>
    </source>
</evidence>
<evidence type="ECO:0000269" key="2">
    <source>
    </source>
</evidence>
<evidence type="ECO:0000303" key="3">
    <source>
    </source>
</evidence>
<evidence type="ECO:0000305" key="4"/>
<evidence type="ECO:0000305" key="5">
    <source>
    </source>
</evidence>
<evidence type="ECO:0000312" key="6">
    <source>
        <dbReference type="EMBL" id="AAS11180.1"/>
    </source>
</evidence>
<evidence type="ECO:0007744" key="7">
    <source>
        <dbReference type="PDB" id="3RG8"/>
    </source>
</evidence>
<evidence type="ECO:0007744" key="8">
    <source>
        <dbReference type="PDB" id="3RGG"/>
    </source>
</evidence>
<evidence type="ECO:0007829" key="9">
    <source>
        <dbReference type="PDB" id="5C5D"/>
    </source>
</evidence>
<proteinExistence type="evidence at protein level"/>
<name>PURE_TREDE</name>
<feature type="chain" id="PRO_0000434131" description="Phosphoribosylaminoimidazole carboxylase">
    <location>
        <begin position="1"/>
        <end position="159"/>
    </location>
</feature>
<feature type="binding site" evidence="1 2 8">
    <location>
        <position position="11"/>
    </location>
    <ligand>
        <name>substrate</name>
    </ligand>
</feature>
<feature type="binding site" evidence="1 2 8">
    <location>
        <position position="14"/>
    </location>
    <ligand>
        <name>substrate</name>
    </ligand>
</feature>
<feature type="binding site" evidence="1 2 8">
    <location>
        <position position="38"/>
    </location>
    <ligand>
        <name>substrate</name>
    </ligand>
</feature>
<feature type="binding site" evidence="1 2 8">
    <location>
        <position position="41"/>
    </location>
    <ligand>
        <name>substrate</name>
    </ligand>
</feature>
<feature type="binding site" evidence="1 2 8">
    <location>
        <position position="67"/>
    </location>
    <ligand>
        <name>substrate</name>
    </ligand>
</feature>
<feature type="binding site" evidence="1 2 8">
    <location>
        <position position="69"/>
    </location>
    <ligand>
        <name>substrate</name>
    </ligand>
</feature>
<feature type="mutagenesis site" description="Lack of activity." evidence="2">
    <original>H</original>
    <variation>N</variation>
    <location>
        <position position="40"/>
    </location>
</feature>
<feature type="strand" evidence="9">
    <location>
        <begin position="4"/>
        <end position="11"/>
    </location>
</feature>
<feature type="helix" evidence="9">
    <location>
        <begin position="12"/>
        <end position="14"/>
    </location>
</feature>
<feature type="helix" evidence="9">
    <location>
        <begin position="15"/>
        <end position="27"/>
    </location>
</feature>
<feature type="strand" evidence="9">
    <location>
        <begin position="31"/>
        <end position="36"/>
    </location>
</feature>
<feature type="turn" evidence="9">
    <location>
        <begin position="39"/>
        <end position="41"/>
    </location>
</feature>
<feature type="helix" evidence="9">
    <location>
        <begin position="43"/>
        <end position="54"/>
    </location>
</feature>
<feature type="strand" evidence="9">
    <location>
        <begin position="56"/>
        <end position="58"/>
    </location>
</feature>
<feature type="strand" evidence="9">
    <location>
        <begin position="60"/>
        <end position="65"/>
    </location>
</feature>
<feature type="helix" evidence="9">
    <location>
        <begin position="72"/>
        <end position="79"/>
    </location>
</feature>
<feature type="strand" evidence="9">
    <location>
        <begin position="80"/>
        <end position="82"/>
    </location>
</feature>
<feature type="strand" evidence="9">
    <location>
        <begin position="84"/>
        <end position="86"/>
    </location>
</feature>
<feature type="helix" evidence="9">
    <location>
        <begin position="93"/>
        <end position="98"/>
    </location>
</feature>
<feature type="helix" evidence="9">
    <location>
        <begin position="99"/>
        <end position="103"/>
    </location>
</feature>
<feature type="helix" evidence="9">
    <location>
        <begin position="117"/>
        <end position="128"/>
    </location>
</feature>
<feature type="turn" evidence="9">
    <location>
        <begin position="129"/>
        <end position="131"/>
    </location>
</feature>
<feature type="helix" evidence="9">
    <location>
        <begin position="133"/>
        <end position="157"/>
    </location>
</feature>
<accession>Q73PV9</accession>
<gene>
    <name evidence="1 3" type="primary">purE</name>
    <name evidence="6" type="ordered locus">TDE_0687</name>
</gene>